<proteinExistence type="inferred from homology"/>
<accession>B8E0B1</accession>
<comment type="function">
    <text evidence="1">Catalyzes the reversible adenylation of nicotinate mononucleotide (NaMN) to nicotinic acid adenine dinucleotide (NaAD).</text>
</comment>
<comment type="catalytic activity">
    <reaction evidence="1">
        <text>nicotinate beta-D-ribonucleotide + ATP + H(+) = deamido-NAD(+) + diphosphate</text>
        <dbReference type="Rhea" id="RHEA:22860"/>
        <dbReference type="ChEBI" id="CHEBI:15378"/>
        <dbReference type="ChEBI" id="CHEBI:30616"/>
        <dbReference type="ChEBI" id="CHEBI:33019"/>
        <dbReference type="ChEBI" id="CHEBI:57502"/>
        <dbReference type="ChEBI" id="CHEBI:58437"/>
        <dbReference type="EC" id="2.7.7.18"/>
    </reaction>
</comment>
<comment type="pathway">
    <text evidence="1">Cofactor biosynthesis; NAD(+) biosynthesis; deamido-NAD(+) from nicotinate D-ribonucleotide: step 1/1.</text>
</comment>
<comment type="similarity">
    <text evidence="1">Belongs to the NadD family.</text>
</comment>
<name>NADD_DICTD</name>
<reference key="1">
    <citation type="journal article" date="2016" name="Front. Microbiol.">
        <title>The complete genome sequence of hyperthermophile Dictyoglomus turgidum DSM 6724 reveals a specialized carbohydrate fermentor.</title>
        <authorList>
            <person name="Brumm P.J."/>
            <person name="Gowda K."/>
            <person name="Robb F.T."/>
            <person name="Mead D.A."/>
        </authorList>
    </citation>
    <scope>NUCLEOTIDE SEQUENCE [LARGE SCALE GENOMIC DNA]</scope>
    <source>
        <strain>DSM 6724 / Z-1310</strain>
    </source>
</reference>
<feature type="chain" id="PRO_1000192232" description="Probable nicotinate-nucleotide adenylyltransferase">
    <location>
        <begin position="1"/>
        <end position="203"/>
    </location>
</feature>
<keyword id="KW-0067">ATP-binding</keyword>
<keyword id="KW-0520">NAD</keyword>
<keyword id="KW-0547">Nucleotide-binding</keyword>
<keyword id="KW-0548">Nucleotidyltransferase</keyword>
<keyword id="KW-0662">Pyridine nucleotide biosynthesis</keyword>
<keyword id="KW-1185">Reference proteome</keyword>
<keyword id="KW-0808">Transferase</keyword>
<protein>
    <recommendedName>
        <fullName evidence="1">Probable nicotinate-nucleotide adenylyltransferase</fullName>
        <ecNumber evidence="1">2.7.7.18</ecNumber>
    </recommendedName>
    <alternativeName>
        <fullName evidence="1">Deamido-NAD(+) diphosphorylase</fullName>
    </alternativeName>
    <alternativeName>
        <fullName evidence="1">Deamido-NAD(+) pyrophosphorylase</fullName>
    </alternativeName>
    <alternativeName>
        <fullName evidence="1">Nicotinate mononucleotide adenylyltransferase</fullName>
        <shortName evidence="1">NaMN adenylyltransferase</shortName>
    </alternativeName>
</protein>
<organism>
    <name type="scientific">Dictyoglomus turgidum (strain DSM 6724 / Z-1310)</name>
    <dbReference type="NCBI Taxonomy" id="515635"/>
    <lineage>
        <taxon>Bacteria</taxon>
        <taxon>Pseudomonadati</taxon>
        <taxon>Dictyoglomota</taxon>
        <taxon>Dictyoglomia</taxon>
        <taxon>Dictyoglomales</taxon>
        <taxon>Dictyoglomaceae</taxon>
        <taxon>Dictyoglomus</taxon>
    </lineage>
</organism>
<evidence type="ECO:0000255" key="1">
    <source>
        <dbReference type="HAMAP-Rule" id="MF_00244"/>
    </source>
</evidence>
<gene>
    <name evidence="1" type="primary">nadD</name>
    <name type="ordered locus">Dtur_1278</name>
</gene>
<sequence>MKIGILGGTFDPIHYGHLWFAEYAREKFKLDKVFFIPNRVPSHREIPIATSKQRYEMVLLATLNNPYFEVLPIELEREGVSYMVDTIRDLSTYFSNAELYLLLGNDAFRDFLKWKDPYKIVEKVSIIVGSRGEEYYTNDLKDFIKTFENKIFFLDFPYYPISAKEIRDRVKKGLSIKYLVPENVEEYIIKNSVYCEEDQKDVK</sequence>
<dbReference type="EC" id="2.7.7.18" evidence="1"/>
<dbReference type="EMBL" id="CP001251">
    <property type="protein sequence ID" value="ACK42556.1"/>
    <property type="molecule type" value="Genomic_DNA"/>
</dbReference>
<dbReference type="RefSeq" id="WP_012583638.1">
    <property type="nucleotide sequence ID" value="NC_011661.1"/>
</dbReference>
<dbReference type="RefSeq" id="YP_002353170.1">
    <property type="nucleotide sequence ID" value="NC_011661.1"/>
</dbReference>
<dbReference type="SMR" id="B8E0B1"/>
<dbReference type="FunCoup" id="B8E0B1">
    <property type="interactions" value="325"/>
</dbReference>
<dbReference type="STRING" id="515635.Dtur_1278"/>
<dbReference type="EnsemblBacteria" id="ACK42556">
    <property type="protein sequence ID" value="ACK42556"/>
    <property type="gene ID" value="Dtur_1278"/>
</dbReference>
<dbReference type="KEGG" id="dtu:Dtur_1278"/>
<dbReference type="PATRIC" id="fig|515635.4.peg.1318"/>
<dbReference type="eggNOG" id="COG1057">
    <property type="taxonomic scope" value="Bacteria"/>
</dbReference>
<dbReference type="HOGENOM" id="CLU_069765_3_1_0"/>
<dbReference type="InParanoid" id="B8E0B1"/>
<dbReference type="OrthoDB" id="5295945at2"/>
<dbReference type="UniPathway" id="UPA00253">
    <property type="reaction ID" value="UER00332"/>
</dbReference>
<dbReference type="Proteomes" id="UP000007719">
    <property type="component" value="Chromosome"/>
</dbReference>
<dbReference type="GO" id="GO:0005524">
    <property type="term" value="F:ATP binding"/>
    <property type="evidence" value="ECO:0007669"/>
    <property type="project" value="UniProtKB-KW"/>
</dbReference>
<dbReference type="GO" id="GO:0000309">
    <property type="term" value="F:nicotinamide-nucleotide adenylyltransferase activity"/>
    <property type="evidence" value="ECO:0000318"/>
    <property type="project" value="GO_Central"/>
</dbReference>
<dbReference type="GO" id="GO:0004515">
    <property type="term" value="F:nicotinate-nucleotide adenylyltransferase activity"/>
    <property type="evidence" value="ECO:0000318"/>
    <property type="project" value="GO_Central"/>
</dbReference>
<dbReference type="GO" id="GO:0009435">
    <property type="term" value="P:NAD biosynthetic process"/>
    <property type="evidence" value="ECO:0000318"/>
    <property type="project" value="GO_Central"/>
</dbReference>
<dbReference type="CDD" id="cd02165">
    <property type="entry name" value="NMNAT"/>
    <property type="match status" value="1"/>
</dbReference>
<dbReference type="FunFam" id="3.40.50.620:FF:000251">
    <property type="entry name" value="Probable nicotinate-nucleotide adenylyltransferase"/>
    <property type="match status" value="1"/>
</dbReference>
<dbReference type="Gene3D" id="3.40.50.620">
    <property type="entry name" value="HUPs"/>
    <property type="match status" value="1"/>
</dbReference>
<dbReference type="HAMAP" id="MF_00244">
    <property type="entry name" value="NaMN_adenylyltr"/>
    <property type="match status" value="1"/>
</dbReference>
<dbReference type="InterPro" id="IPR004821">
    <property type="entry name" value="Cyt_trans-like"/>
</dbReference>
<dbReference type="InterPro" id="IPR005248">
    <property type="entry name" value="NadD/NMNAT"/>
</dbReference>
<dbReference type="InterPro" id="IPR014729">
    <property type="entry name" value="Rossmann-like_a/b/a_fold"/>
</dbReference>
<dbReference type="NCBIfam" id="TIGR00125">
    <property type="entry name" value="cyt_tran_rel"/>
    <property type="match status" value="1"/>
</dbReference>
<dbReference type="NCBIfam" id="TIGR00482">
    <property type="entry name" value="nicotinate (nicotinamide) nucleotide adenylyltransferase"/>
    <property type="match status" value="1"/>
</dbReference>
<dbReference type="NCBIfam" id="NF000840">
    <property type="entry name" value="PRK00071.1-3"/>
    <property type="match status" value="1"/>
</dbReference>
<dbReference type="PANTHER" id="PTHR39321">
    <property type="entry name" value="NICOTINATE-NUCLEOTIDE ADENYLYLTRANSFERASE-RELATED"/>
    <property type="match status" value="1"/>
</dbReference>
<dbReference type="PANTHER" id="PTHR39321:SF3">
    <property type="entry name" value="PHOSPHOPANTETHEINE ADENYLYLTRANSFERASE"/>
    <property type="match status" value="1"/>
</dbReference>
<dbReference type="Pfam" id="PF01467">
    <property type="entry name" value="CTP_transf_like"/>
    <property type="match status" value="1"/>
</dbReference>
<dbReference type="SUPFAM" id="SSF52374">
    <property type="entry name" value="Nucleotidylyl transferase"/>
    <property type="match status" value="1"/>
</dbReference>